<gene>
    <name type="primary">RRT14</name>
    <name type="ordered locus">ZYRO0A01320g</name>
</gene>
<organism>
    <name type="scientific">Zygosaccharomyces rouxii (strain ATCC 2623 / CBS 732 / NBRC 1130 / NCYC 568 / NRRL Y-229)</name>
    <dbReference type="NCBI Taxonomy" id="559307"/>
    <lineage>
        <taxon>Eukaryota</taxon>
        <taxon>Fungi</taxon>
        <taxon>Dikarya</taxon>
        <taxon>Ascomycota</taxon>
        <taxon>Saccharomycotina</taxon>
        <taxon>Saccharomycetes</taxon>
        <taxon>Saccharomycetales</taxon>
        <taxon>Saccharomycetaceae</taxon>
        <taxon>Zygosaccharomyces</taxon>
    </lineage>
</organism>
<dbReference type="EMBL" id="CU928173">
    <property type="protein sequence ID" value="CAR25498.1"/>
    <property type="molecule type" value="Genomic_DNA"/>
</dbReference>
<dbReference type="RefSeq" id="XP_002494431.1">
    <property type="nucleotide sequence ID" value="XM_002494386.1"/>
</dbReference>
<dbReference type="SMR" id="C5DP87"/>
<dbReference type="FunCoup" id="C5DP87">
    <property type="interactions" value="301"/>
</dbReference>
<dbReference type="STRING" id="559307.C5DP87"/>
<dbReference type="GeneID" id="8201711"/>
<dbReference type="KEGG" id="zro:ZYRO0A01320g"/>
<dbReference type="HOGENOM" id="CLU_095038_0_0_1"/>
<dbReference type="InParanoid" id="C5DP87"/>
<dbReference type="Proteomes" id="UP000008536">
    <property type="component" value="Chromosome A"/>
</dbReference>
<dbReference type="GO" id="GO:0005730">
    <property type="term" value="C:nucleolus"/>
    <property type="evidence" value="ECO:0007669"/>
    <property type="project" value="UniProtKB-SubCell"/>
</dbReference>
<dbReference type="InterPro" id="IPR031404">
    <property type="entry name" value="Rrt14"/>
</dbReference>
<dbReference type="Pfam" id="PF17075">
    <property type="entry name" value="RRT14"/>
    <property type="match status" value="1"/>
</dbReference>
<evidence type="ECO:0000250" key="1"/>
<evidence type="ECO:0000256" key="2">
    <source>
        <dbReference type="SAM" id="MobiDB-lite"/>
    </source>
</evidence>
<evidence type="ECO:0000305" key="3"/>
<keyword id="KW-0539">Nucleus</keyword>
<keyword id="KW-1185">Reference proteome</keyword>
<keyword id="KW-0804">Transcription</keyword>
<keyword id="KW-0805">Transcription regulation</keyword>
<name>RRT14_ZYGRC</name>
<accession>C5DP87</accession>
<proteinExistence type="inferred from homology"/>
<reference key="1">
    <citation type="journal article" date="2009" name="Genome Res.">
        <title>Comparative genomics of protoploid Saccharomycetaceae.</title>
        <authorList>
            <consortium name="The Genolevures Consortium"/>
            <person name="Souciet J.-L."/>
            <person name="Dujon B."/>
            <person name="Gaillardin C."/>
            <person name="Johnston M."/>
            <person name="Baret P.V."/>
            <person name="Cliften P."/>
            <person name="Sherman D.J."/>
            <person name="Weissenbach J."/>
            <person name="Westhof E."/>
            <person name="Wincker P."/>
            <person name="Jubin C."/>
            <person name="Poulain J."/>
            <person name="Barbe V."/>
            <person name="Segurens B."/>
            <person name="Artiguenave F."/>
            <person name="Anthouard V."/>
            <person name="Vacherie B."/>
            <person name="Val M.-E."/>
            <person name="Fulton R.S."/>
            <person name="Minx P."/>
            <person name="Wilson R."/>
            <person name="Durrens P."/>
            <person name="Jean G."/>
            <person name="Marck C."/>
            <person name="Martin T."/>
            <person name="Nikolski M."/>
            <person name="Rolland T."/>
            <person name="Seret M.-L."/>
            <person name="Casaregola S."/>
            <person name="Despons L."/>
            <person name="Fairhead C."/>
            <person name="Fischer G."/>
            <person name="Lafontaine I."/>
            <person name="Leh V."/>
            <person name="Lemaire M."/>
            <person name="de Montigny J."/>
            <person name="Neuveglise C."/>
            <person name="Thierry A."/>
            <person name="Blanc-Lenfle I."/>
            <person name="Bleykasten C."/>
            <person name="Diffels J."/>
            <person name="Fritsch E."/>
            <person name="Frangeul L."/>
            <person name="Goeffon A."/>
            <person name="Jauniaux N."/>
            <person name="Kachouri-Lafond R."/>
            <person name="Payen C."/>
            <person name="Potier S."/>
            <person name="Pribylova L."/>
            <person name="Ozanne C."/>
            <person name="Richard G.-F."/>
            <person name="Sacerdot C."/>
            <person name="Straub M.-L."/>
            <person name="Talla E."/>
        </authorList>
    </citation>
    <scope>NUCLEOTIDE SEQUENCE [LARGE SCALE GENOMIC DNA]</scope>
    <source>
        <strain>ATCC 2623 / CBS 732 / BCRC 21506 / NBRC 1130 / NCYC 568 / NRRL Y-229</strain>
    </source>
</reference>
<comment type="function">
    <text evidence="1">Involved in ribosome biogenesis, probably through modulation of rDNA transcription.</text>
</comment>
<comment type="subcellular location">
    <subcellularLocation>
        <location evidence="1">Nucleus</location>
        <location evidence="1">Nucleolus</location>
    </subcellularLocation>
</comment>
<comment type="similarity">
    <text evidence="3">Belongs to the RRT14 family.</text>
</comment>
<feature type="chain" id="PRO_0000404353" description="Regulator of rDNA transcription 14">
    <location>
        <begin position="1"/>
        <end position="212"/>
    </location>
</feature>
<feature type="region of interest" description="Disordered" evidence="2">
    <location>
        <begin position="26"/>
        <end position="49"/>
    </location>
</feature>
<feature type="region of interest" description="Disordered" evidence="2">
    <location>
        <begin position="152"/>
        <end position="212"/>
    </location>
</feature>
<feature type="compositionally biased region" description="Basic residues" evidence="2">
    <location>
        <begin position="157"/>
        <end position="166"/>
    </location>
</feature>
<feature type="compositionally biased region" description="Acidic residues" evidence="2">
    <location>
        <begin position="195"/>
        <end position="212"/>
    </location>
</feature>
<sequence length="212" mass="24528">MSSNVSQLHANDAVKGLLAKMLPGAVQSAENSAQKTKQKQKGSKAQLIDRNLKRRVQLQELDVEKLKKKQSRIRRRDLQKQRRGQEEIKQLAELEVLERHRKEGKLTKKETKHLNRLVNVNAERAKSWELDEDEKEDLLELQKYILEKTTSANRVAKSQKRRQKKKTFNDNKKGVSASMARRYPGLTPGLAPVDMSDEEESSEEEEEVEMKE</sequence>
<protein>
    <recommendedName>
        <fullName>Regulator of rDNA transcription 14</fullName>
    </recommendedName>
</protein>